<accession>Q9XXJ0</accession>
<feature type="chain" id="PRO_0000134471" description="Deoxyhypusine synthase" evidence="2">
    <location>
        <begin position="1"/>
        <end position="371"/>
    </location>
</feature>
<feature type="active site" description="Nucleophile" evidence="1">
    <location>
        <position position="337"/>
    </location>
</feature>
<feature type="binding site" evidence="1">
    <location>
        <begin position="112"/>
        <end position="116"/>
    </location>
    <ligand>
        <name>NAD(+)</name>
        <dbReference type="ChEBI" id="CHEBI:57540"/>
    </ligand>
</feature>
<feature type="binding site" evidence="1">
    <location>
        <begin position="138"/>
        <end position="140"/>
    </location>
    <ligand>
        <name>NAD(+)</name>
        <dbReference type="ChEBI" id="CHEBI:57540"/>
    </ligand>
</feature>
<feature type="binding site" evidence="1">
    <location>
        <begin position="143"/>
        <end position="144"/>
    </location>
    <ligand>
        <name>spermidine</name>
        <dbReference type="ChEBI" id="CHEBI:57834"/>
    </ligand>
</feature>
<feature type="binding site" evidence="1">
    <location>
        <position position="144"/>
    </location>
    <ligand>
        <name>NAD(+)</name>
        <dbReference type="ChEBI" id="CHEBI:57540"/>
    </ligand>
</feature>
<feature type="binding site" evidence="1">
    <location>
        <position position="245"/>
    </location>
    <ligand>
        <name>NAD(+)</name>
        <dbReference type="ChEBI" id="CHEBI:57540"/>
    </ligand>
</feature>
<feature type="binding site" evidence="1">
    <location>
        <position position="250"/>
    </location>
    <ligand>
        <name>spermidine</name>
        <dbReference type="ChEBI" id="CHEBI:57834"/>
    </ligand>
</feature>
<feature type="binding site" evidence="1">
    <location>
        <position position="291"/>
    </location>
    <ligand>
        <name>NAD(+)</name>
        <dbReference type="ChEBI" id="CHEBI:57540"/>
    </ligand>
</feature>
<feature type="binding site" evidence="1">
    <location>
        <position position="296"/>
    </location>
    <ligand>
        <name>spermidine</name>
        <dbReference type="ChEBI" id="CHEBI:57834"/>
    </ligand>
</feature>
<feature type="binding site" evidence="1">
    <location>
        <begin position="316"/>
        <end position="317"/>
    </location>
    <ligand>
        <name>NAD(+)</name>
        <dbReference type="ChEBI" id="CHEBI:57540"/>
    </ligand>
</feature>
<feature type="binding site" evidence="1">
    <location>
        <begin position="322"/>
        <end position="324"/>
    </location>
    <ligand>
        <name>spermidine</name>
        <dbReference type="ChEBI" id="CHEBI:57834"/>
    </ligand>
</feature>
<feature type="binding site" evidence="1">
    <location>
        <begin position="331"/>
        <end position="337"/>
    </location>
    <ligand>
        <name>spermidine</name>
        <dbReference type="ChEBI" id="CHEBI:57834"/>
    </ligand>
</feature>
<feature type="binding site" evidence="1">
    <location>
        <begin position="350"/>
        <end position="351"/>
    </location>
    <ligand>
        <name>NAD(+)</name>
        <dbReference type="ChEBI" id="CHEBI:57540"/>
    </ligand>
</feature>
<reference key="1">
    <citation type="journal article" date="1998" name="Science">
        <title>Genome sequence of the nematode C. elegans: a platform for investigating biology.</title>
        <authorList>
            <consortium name="The C. elegans sequencing consortium"/>
        </authorList>
    </citation>
    <scope>NUCLEOTIDE SEQUENCE [LARGE SCALE GENOMIC DNA]</scope>
    <source>
        <strain>Bristol N2</strain>
    </source>
</reference>
<gene>
    <name evidence="3" type="primary">dhps-1</name>
    <name evidence="3" type="ORF">Y17G7B.4</name>
</gene>
<comment type="function">
    <text evidence="1">Catalyzes the NAD-dependent oxidative cleavage of spermidine and the subsequent transfer of the butylamine moiety of spermidine to the epsilon-amino group of a critical lysine residue of the eIF-5A precursor protein to form the intermediate deoxyhypusine residue. This is the first step of the post-translational modification of that lysine into an unusual amino acid residue named hypusine. Hypusination is unique to mature eIF-5A factor and is essential for its function.</text>
</comment>
<comment type="catalytic activity">
    <reaction evidence="1">
        <text>[eIF5A protein]-L-lysine + spermidine = [eIF5A protein]-deoxyhypusine + propane-1,3-diamine</text>
        <dbReference type="Rhea" id="RHEA:33299"/>
        <dbReference type="Rhea" id="RHEA-COMP:10143"/>
        <dbReference type="Rhea" id="RHEA-COMP:10144"/>
        <dbReference type="ChEBI" id="CHEBI:29969"/>
        <dbReference type="ChEBI" id="CHEBI:57484"/>
        <dbReference type="ChEBI" id="CHEBI:57834"/>
        <dbReference type="ChEBI" id="CHEBI:82657"/>
        <dbReference type="EC" id="2.5.1.46"/>
    </reaction>
</comment>
<comment type="cofactor">
    <cofactor evidence="1">
        <name>NAD(+)</name>
        <dbReference type="ChEBI" id="CHEBI:57540"/>
    </cofactor>
</comment>
<comment type="pathway">
    <text evidence="1">Protein modification; eIF5A hypusination.</text>
</comment>
<comment type="interaction">
    <interactant intactId="EBI-322139">
        <id>Q9XXJ0</id>
    </interactant>
    <interactant intactId="EBI-327278">
        <id>P34563</id>
        <label>iff-1</label>
    </interactant>
    <organismsDiffer>false</organismsDiffer>
    <experiments>3</experiments>
</comment>
<comment type="similarity">
    <text evidence="2">Belongs to the deoxyhypusine synthase family.</text>
</comment>
<organism>
    <name type="scientific">Caenorhabditis elegans</name>
    <dbReference type="NCBI Taxonomy" id="6239"/>
    <lineage>
        <taxon>Eukaryota</taxon>
        <taxon>Metazoa</taxon>
        <taxon>Ecdysozoa</taxon>
        <taxon>Nematoda</taxon>
        <taxon>Chromadorea</taxon>
        <taxon>Rhabditida</taxon>
        <taxon>Rhabditina</taxon>
        <taxon>Rhabditomorpha</taxon>
        <taxon>Rhabditoidea</taxon>
        <taxon>Rhabditidae</taxon>
        <taxon>Peloderinae</taxon>
        <taxon>Caenorhabditis</taxon>
    </lineage>
</organism>
<proteinExistence type="evidence at protein level"/>
<name>DHYS_CAEEL</name>
<keyword id="KW-0386">Hypusine biosynthesis</keyword>
<keyword id="KW-0520">NAD</keyword>
<keyword id="KW-1185">Reference proteome</keyword>
<keyword id="KW-0808">Transferase</keyword>
<dbReference type="EC" id="2.5.1.46" evidence="1"/>
<dbReference type="EMBL" id="AL023828">
    <property type="protein sequence ID" value="CAA19451.1"/>
    <property type="molecule type" value="Genomic_DNA"/>
</dbReference>
<dbReference type="PIR" id="T26497">
    <property type="entry name" value="T26497"/>
</dbReference>
<dbReference type="RefSeq" id="NP_496557.1">
    <property type="nucleotide sequence ID" value="NM_064156.6"/>
</dbReference>
<dbReference type="SMR" id="Q9XXJ0"/>
<dbReference type="BioGRID" id="40144">
    <property type="interactions" value="4"/>
</dbReference>
<dbReference type="DIP" id="DIP-27454N"/>
<dbReference type="FunCoup" id="Q9XXJ0">
    <property type="interactions" value="2763"/>
</dbReference>
<dbReference type="IntAct" id="Q9XXJ0">
    <property type="interactions" value="2"/>
</dbReference>
<dbReference type="STRING" id="6239.Y17G7B.4.1"/>
<dbReference type="PaxDb" id="6239-Y17G7B.4"/>
<dbReference type="PeptideAtlas" id="Q9XXJ0"/>
<dbReference type="EnsemblMetazoa" id="Y17G7B.4.1">
    <property type="protein sequence ID" value="Y17G7B.4.1"/>
    <property type="gene ID" value="WBGene00012460"/>
</dbReference>
<dbReference type="GeneID" id="174840"/>
<dbReference type="KEGG" id="cel:CELE_Y17G7B.4"/>
<dbReference type="UCSC" id="Y17G7B.4">
    <property type="organism name" value="c. elegans"/>
</dbReference>
<dbReference type="AGR" id="WB:WBGene00012460"/>
<dbReference type="CTD" id="174840"/>
<dbReference type="WormBase" id="Y17G7B.4">
    <property type="protein sequence ID" value="CE19037"/>
    <property type="gene ID" value="WBGene00012460"/>
    <property type="gene designation" value="dhps-1"/>
</dbReference>
<dbReference type="eggNOG" id="KOG2924">
    <property type="taxonomic scope" value="Eukaryota"/>
</dbReference>
<dbReference type="GeneTree" id="ENSGT00390000008063"/>
<dbReference type="HOGENOM" id="CLU_039781_0_0_1"/>
<dbReference type="InParanoid" id="Q9XXJ0"/>
<dbReference type="OMA" id="HSIINAN"/>
<dbReference type="OrthoDB" id="294378at2759"/>
<dbReference type="PhylomeDB" id="Q9XXJ0"/>
<dbReference type="Reactome" id="R-CEL-204626">
    <property type="pathway name" value="Hypusine synthesis from eIF5A-lysine"/>
</dbReference>
<dbReference type="SignaLink" id="Q9XXJ0"/>
<dbReference type="UniPathway" id="UPA00354"/>
<dbReference type="PRO" id="PR:Q9XXJ0"/>
<dbReference type="Proteomes" id="UP000001940">
    <property type="component" value="Chromosome II"/>
</dbReference>
<dbReference type="Bgee" id="WBGene00012460">
    <property type="expression patterns" value="Expressed in germ line (C elegans) and 4 other cell types or tissues"/>
</dbReference>
<dbReference type="GO" id="GO:0005737">
    <property type="term" value="C:cytoplasm"/>
    <property type="evidence" value="ECO:0000318"/>
    <property type="project" value="GO_Central"/>
</dbReference>
<dbReference type="GO" id="GO:0034038">
    <property type="term" value="F:deoxyhypusine synthase activity"/>
    <property type="evidence" value="ECO:0000318"/>
    <property type="project" value="GO_Central"/>
</dbReference>
<dbReference type="GO" id="GO:0008216">
    <property type="term" value="P:spermidine metabolic process"/>
    <property type="evidence" value="ECO:0000318"/>
    <property type="project" value="GO_Central"/>
</dbReference>
<dbReference type="FunFam" id="3.40.910.10:FF:000001">
    <property type="entry name" value="Probable deoxyhypusine synthase"/>
    <property type="match status" value="1"/>
</dbReference>
<dbReference type="Gene3D" id="3.40.910.10">
    <property type="entry name" value="Deoxyhypusine synthase"/>
    <property type="match status" value="1"/>
</dbReference>
<dbReference type="InterPro" id="IPR002773">
    <property type="entry name" value="Deoxyhypusine_synthase"/>
</dbReference>
<dbReference type="InterPro" id="IPR036982">
    <property type="entry name" value="Deoxyhypusine_synthase_sf"/>
</dbReference>
<dbReference type="InterPro" id="IPR029035">
    <property type="entry name" value="DHS-like_NAD/FAD-binding_dom"/>
</dbReference>
<dbReference type="NCBIfam" id="TIGR00321">
    <property type="entry name" value="dhys"/>
    <property type="match status" value="1"/>
</dbReference>
<dbReference type="PANTHER" id="PTHR11703">
    <property type="entry name" value="DEOXYHYPUSINE SYNTHASE"/>
    <property type="match status" value="1"/>
</dbReference>
<dbReference type="PANTHER" id="PTHR11703:SF0">
    <property type="entry name" value="DEOXYHYPUSINE SYNTHASE"/>
    <property type="match status" value="1"/>
</dbReference>
<dbReference type="Pfam" id="PF01916">
    <property type="entry name" value="DS"/>
    <property type="match status" value="1"/>
</dbReference>
<dbReference type="SUPFAM" id="SSF52467">
    <property type="entry name" value="DHS-like NAD/FAD-binding domain"/>
    <property type="match status" value="1"/>
</dbReference>
<evidence type="ECO:0000250" key="1">
    <source>
        <dbReference type="UniProtKB" id="P49366"/>
    </source>
</evidence>
<evidence type="ECO:0000305" key="2"/>
<evidence type="ECO:0000312" key="3">
    <source>
        <dbReference type="WormBase" id="Y17G7B.4"/>
    </source>
</evidence>
<protein>
    <recommendedName>
        <fullName evidence="1">Deoxyhypusine synthase</fullName>
        <shortName evidence="1">DHS</shortName>
        <ecNumber evidence="1">2.5.1.46</ecNumber>
    </recommendedName>
</protein>
<sequence length="371" mass="40468">MSTNEAAASQEDIALAQGAVLVKSCQVPDGSIPIRGFDFSTASGPDFSLSAILSSYMSTGFQATHLAQAIQQVNQMLSLRDTPLTCDDDEKLFPYPEGRQKRSCTIFLGYTSNLVTSGLREVLRYCVQRNLVDCIVTSAGGIEEDLIKCLKPSYLGTFTMDGAKLRSNGMNRAGNVLIPNDNYCAFEDWLMPILDECLVEQEEKHLNWTPSKLIQRLGERIGDESSILYWAAKHRIPVFCPALTDGSLGDMLYFHSVKSSPGLRVDIVEDVRHINTIAVKSFKTGSIILGGGVVKHHINNANLMRNGADHTVYINTGQEFDGSDSGAQPDEAVSWGKVKPSAGAVKVHAEATLVFPLLVAETFAKHEGHKD</sequence>